<dbReference type="EMBL" id="AJ239317">
    <property type="protein sequence ID" value="CAB85586.1"/>
    <property type="molecule type" value="mRNA"/>
</dbReference>
<dbReference type="SMR" id="Q9I9C3"/>
<dbReference type="GlyCosmos" id="Q9I9C3">
    <property type="glycosylation" value="2 sites, No reported glycans"/>
</dbReference>
<dbReference type="GO" id="GO:0005890">
    <property type="term" value="C:sodium:potassium-exchanging ATPase complex"/>
    <property type="evidence" value="ECO:0000303"/>
    <property type="project" value="UniProtKB"/>
</dbReference>
<dbReference type="GO" id="GO:0001671">
    <property type="term" value="F:ATPase activator activity"/>
    <property type="evidence" value="ECO:0007669"/>
    <property type="project" value="TreeGrafter"/>
</dbReference>
<dbReference type="GO" id="GO:0005391">
    <property type="term" value="F:P-type sodium:potassium-exchanging transporter activity"/>
    <property type="evidence" value="ECO:0000303"/>
    <property type="project" value="UniProtKB"/>
</dbReference>
<dbReference type="GO" id="GO:0030007">
    <property type="term" value="P:intracellular potassium ion homeostasis"/>
    <property type="evidence" value="ECO:0007669"/>
    <property type="project" value="TreeGrafter"/>
</dbReference>
<dbReference type="GO" id="GO:0006883">
    <property type="term" value="P:intracellular sodium ion homeostasis"/>
    <property type="evidence" value="ECO:0007669"/>
    <property type="project" value="TreeGrafter"/>
</dbReference>
<dbReference type="GO" id="GO:1990573">
    <property type="term" value="P:potassium ion import across plasma membrane"/>
    <property type="evidence" value="ECO:0007669"/>
    <property type="project" value="TreeGrafter"/>
</dbReference>
<dbReference type="GO" id="GO:0006813">
    <property type="term" value="P:potassium ion transport"/>
    <property type="evidence" value="ECO:0000303"/>
    <property type="project" value="UniProtKB"/>
</dbReference>
<dbReference type="GO" id="GO:0036376">
    <property type="term" value="P:sodium ion export across plasma membrane"/>
    <property type="evidence" value="ECO:0007669"/>
    <property type="project" value="TreeGrafter"/>
</dbReference>
<dbReference type="GO" id="GO:0006814">
    <property type="term" value="P:sodium ion transport"/>
    <property type="evidence" value="ECO:0000303"/>
    <property type="project" value="UniProtKB"/>
</dbReference>
<dbReference type="FunFam" id="1.20.5.170:FF:000062">
    <property type="entry name" value="Sodium/potassium-transporting ATPase subunit beta"/>
    <property type="match status" value="1"/>
</dbReference>
<dbReference type="FunFam" id="2.60.40.1660:FF:000002">
    <property type="entry name" value="Sodium/potassium-transporting ATPase subunit beta"/>
    <property type="match status" value="1"/>
</dbReference>
<dbReference type="Gene3D" id="2.60.40.1660">
    <property type="entry name" value="Na, k-atpase alpha subunit"/>
    <property type="match status" value="1"/>
</dbReference>
<dbReference type="InterPro" id="IPR000402">
    <property type="entry name" value="Na/K_ATPase_sub_beta"/>
</dbReference>
<dbReference type="InterPro" id="IPR038702">
    <property type="entry name" value="Na/K_ATPase_sub_beta_sf"/>
</dbReference>
<dbReference type="NCBIfam" id="TIGR01107">
    <property type="entry name" value="Na_K_ATPase_bet"/>
    <property type="match status" value="1"/>
</dbReference>
<dbReference type="PANTHER" id="PTHR11523">
    <property type="entry name" value="SODIUM/POTASSIUM-DEPENDENT ATPASE BETA SUBUNIT"/>
    <property type="match status" value="1"/>
</dbReference>
<dbReference type="PANTHER" id="PTHR11523:SF10">
    <property type="entry name" value="SODIUM_POTASSIUM-TRANSPORTING ATPASE SUBUNIT BETA-1"/>
    <property type="match status" value="1"/>
</dbReference>
<dbReference type="Pfam" id="PF00287">
    <property type="entry name" value="Na_K-ATPase"/>
    <property type="match status" value="1"/>
</dbReference>
<dbReference type="PROSITE" id="PS00390">
    <property type="entry name" value="ATPASE_NA_K_BETA_1"/>
    <property type="match status" value="1"/>
</dbReference>
<dbReference type="PROSITE" id="PS00391">
    <property type="entry name" value="ATPASE_NA_K_BETA_2"/>
    <property type="match status" value="1"/>
</dbReference>
<keyword id="KW-1003">Cell membrane</keyword>
<keyword id="KW-1015">Disulfide bond</keyword>
<keyword id="KW-0325">Glycoprotein</keyword>
<keyword id="KW-0406">Ion transport</keyword>
<keyword id="KW-0472">Membrane</keyword>
<keyword id="KW-0630">Potassium</keyword>
<keyword id="KW-0633">Potassium transport</keyword>
<keyword id="KW-0735">Signal-anchor</keyword>
<keyword id="KW-0915">Sodium</keyword>
<keyword id="KW-0739">Sodium transport</keyword>
<keyword id="KW-0740">Sodium/potassium transport</keyword>
<keyword id="KW-0812">Transmembrane</keyword>
<keyword id="KW-1133">Transmembrane helix</keyword>
<keyword id="KW-0813">Transport</keyword>
<gene>
    <name evidence="5" type="primary">atnb233</name>
</gene>
<name>AT233_ANGAN</name>
<evidence type="ECO:0000250" key="1">
    <source>
        <dbReference type="UniProtKB" id="P33704"/>
    </source>
</evidence>
<evidence type="ECO:0000255" key="2"/>
<evidence type="ECO:0000269" key="3">
    <source>
    </source>
</evidence>
<evidence type="ECO:0000305" key="4"/>
<evidence type="ECO:0000312" key="5">
    <source>
        <dbReference type="EMBL" id="CAB85586.1"/>
    </source>
</evidence>
<feature type="chain" id="PRO_0000219115" description="Sodium/potassium-transporting ATPase subunit beta-233">
    <location>
        <begin position="1"/>
        <end position="302"/>
    </location>
</feature>
<feature type="topological domain" description="Cytoplasmic" evidence="2">
    <location>
        <begin position="1"/>
        <end position="30"/>
    </location>
</feature>
<feature type="transmembrane region" description="Helical; Signal-anchor for type II membrane protein" evidence="2">
    <location>
        <begin position="31"/>
        <end position="51"/>
    </location>
</feature>
<feature type="topological domain" description="Extracellular" evidence="2">
    <location>
        <begin position="52"/>
        <end position="302"/>
    </location>
</feature>
<feature type="glycosylation site" description="N-linked (GlcNAc...) asparagine" evidence="2">
    <location>
        <position position="193"/>
    </location>
</feature>
<feature type="glycosylation site" description="N-linked (GlcNAc...) asparagine" evidence="2">
    <location>
        <position position="263"/>
    </location>
</feature>
<feature type="disulfide bond" evidence="1">
    <location>
        <begin position="125"/>
        <end position="148"/>
    </location>
</feature>
<feature type="disulfide bond" evidence="1">
    <location>
        <begin position="158"/>
        <end position="174"/>
    </location>
</feature>
<feature type="disulfide bond" evidence="1">
    <location>
        <begin position="213"/>
        <end position="274"/>
    </location>
</feature>
<sequence length="302" mass="34707">MSGNKDSDGGWKTFIWNSEKKELLGRTGCSWFKILLFYVIFYGCLAAVFVGTIQALLLTLSNYKPTHQDRVAPPGLSHTPCPEKAEITFNKHELETYMKYTKGMKEFLELYDETAQLDQLKYEDCGENPGGYKNRGDLESDIGVRKACRFKRSWLKDCSGLEDRTFGFKDGKPCVIVKLNRIVNFRPKPPNSNESIPEDAKAKVRPNVIPIYCTNKKEEDAGKLQEVKYFGIGDGFPLQYYPYYGKLLHPQYLQPLVAIQFTNLTMNTELRIECRIYGENIGYSEKDRYQGRFDIKITVNDS</sequence>
<organism>
    <name type="scientific">Anguilla anguilla</name>
    <name type="common">European freshwater eel</name>
    <name type="synonym">Muraena anguilla</name>
    <dbReference type="NCBI Taxonomy" id="7936"/>
    <lineage>
        <taxon>Eukaryota</taxon>
        <taxon>Metazoa</taxon>
        <taxon>Chordata</taxon>
        <taxon>Craniata</taxon>
        <taxon>Vertebrata</taxon>
        <taxon>Euteleostomi</taxon>
        <taxon>Actinopterygii</taxon>
        <taxon>Neopterygii</taxon>
        <taxon>Teleostei</taxon>
        <taxon>Anguilliformes</taxon>
        <taxon>Anguillidae</taxon>
        <taxon>Anguilla</taxon>
    </lineage>
</organism>
<comment type="function">
    <text evidence="4">This is the non-catalytic component of the active enzyme, which catalyzes the hydrolysis of ATP coupled with the exchange of Na(+) and K(+) ions across the plasma membrane. The beta subunit regulates, through assembly of alpha/beta heterodimers, the number of sodium pumps transported to the plasma membrane.</text>
</comment>
<comment type="subunit">
    <text evidence="4">The sodium/potassium-transporting ATPase is composed of a catalytic alpha subunit, an auxiliary non-catalytic beta subunit and an additional regulatory subunit.</text>
</comment>
<comment type="subcellular location">
    <subcellularLocation>
        <location evidence="4">Cell membrane</location>
        <topology>Single-pass type II membrane protein</topology>
    </subcellularLocation>
</comment>
<comment type="tissue specificity">
    <text evidence="3">Expressed mainly in epithelial tissues.</text>
</comment>
<comment type="induction">
    <text evidence="3">By seawater acclimation in sexually maturing migratory silver eels but not in sexually immature non-migratory yellow eels.</text>
</comment>
<comment type="PTM">
    <text evidence="3">Glycosylated.</text>
</comment>
<comment type="similarity">
    <text evidence="4">Belongs to the X(+)/potassium ATPases subunit beta family.</text>
</comment>
<accession>Q9I9C3</accession>
<proteinExistence type="evidence at protein level"/>
<protein>
    <recommendedName>
        <fullName>Sodium/potassium-transporting ATPase subunit beta-233</fullName>
    </recommendedName>
    <alternativeName>
        <fullName>Sodium/potassium-dependent ATPase subunit beta-233</fullName>
    </alternativeName>
</protein>
<reference evidence="4 5" key="1">
    <citation type="journal article" date="2000" name="Am. J. Physiol.">
        <title>Expression of a duplicate Na,K-ATPase beta(1)-isoform in the European eel (Anguilla anguilla).</title>
        <authorList>
            <person name="Cutler C.P."/>
            <person name="Brezillon S."/>
            <person name="Bekir S."/>
            <person name="Sanders I.L."/>
            <person name="Hazon N."/>
            <person name="Cramb G."/>
        </authorList>
    </citation>
    <scope>NUCLEOTIDE SEQUENCE [MRNA]</scope>
    <scope>TISSUE SPECIFICITY</scope>
    <scope>INDUCTION</scope>
    <scope>GLYCOSYLATION</scope>
    <source>
        <tissue evidence="3">Gill</tissue>
    </source>
</reference>